<reference key="1">
    <citation type="journal article" date="2002" name="Plant Cell">
        <title>FRD3, a member of the multidrug and toxin efflux family, controls iron deficiency responses in Arabidopsis.</title>
        <authorList>
            <person name="Rogers E.E."/>
            <person name="Guerinot M.L."/>
        </authorList>
    </citation>
    <scope>NUCLEOTIDE SEQUENCE [MRNA]</scope>
    <scope>FUNCTION</scope>
    <scope>MUTAGENESIS OF ALA-54</scope>
    <scope>DISRUPTION PHENOTYPE</scope>
    <scope>TISSUE SPECIFICITY</scope>
    <scope>INDUCTION BY IRON</scope>
    <source>
        <strain>cv. Columbia</strain>
    </source>
</reference>
<reference key="2">
    <citation type="journal article" date="2000" name="Nature">
        <title>Sequence and analysis of chromosome 3 of the plant Arabidopsis thaliana.</title>
        <authorList>
            <person name="Salanoubat M."/>
            <person name="Lemcke K."/>
            <person name="Rieger M."/>
            <person name="Ansorge W."/>
            <person name="Unseld M."/>
            <person name="Fartmann B."/>
            <person name="Valle G."/>
            <person name="Bloecker H."/>
            <person name="Perez-Alonso M."/>
            <person name="Obermaier B."/>
            <person name="Delseny M."/>
            <person name="Boutry M."/>
            <person name="Grivell L.A."/>
            <person name="Mache R."/>
            <person name="Puigdomenech P."/>
            <person name="De Simone V."/>
            <person name="Choisne N."/>
            <person name="Artiguenave F."/>
            <person name="Robert C."/>
            <person name="Brottier P."/>
            <person name="Wincker P."/>
            <person name="Cattolico L."/>
            <person name="Weissenbach J."/>
            <person name="Saurin W."/>
            <person name="Quetier F."/>
            <person name="Schaefer M."/>
            <person name="Mueller-Auer S."/>
            <person name="Gabel C."/>
            <person name="Fuchs M."/>
            <person name="Benes V."/>
            <person name="Wurmbach E."/>
            <person name="Drzonek H."/>
            <person name="Erfle H."/>
            <person name="Jordan N."/>
            <person name="Bangert S."/>
            <person name="Wiedelmann R."/>
            <person name="Kranz H."/>
            <person name="Voss H."/>
            <person name="Holland R."/>
            <person name="Brandt P."/>
            <person name="Nyakatura G."/>
            <person name="Vezzi A."/>
            <person name="D'Angelo M."/>
            <person name="Pallavicini A."/>
            <person name="Toppo S."/>
            <person name="Simionati B."/>
            <person name="Conrad A."/>
            <person name="Hornischer K."/>
            <person name="Kauer G."/>
            <person name="Loehnert T.-H."/>
            <person name="Nordsiek G."/>
            <person name="Reichelt J."/>
            <person name="Scharfe M."/>
            <person name="Schoen O."/>
            <person name="Bargues M."/>
            <person name="Terol J."/>
            <person name="Climent J."/>
            <person name="Navarro P."/>
            <person name="Collado C."/>
            <person name="Perez-Perez A."/>
            <person name="Ottenwaelder B."/>
            <person name="Duchemin D."/>
            <person name="Cooke R."/>
            <person name="Laudie M."/>
            <person name="Berger-Llauro C."/>
            <person name="Purnelle B."/>
            <person name="Masuy D."/>
            <person name="de Haan M."/>
            <person name="Maarse A.C."/>
            <person name="Alcaraz J.-P."/>
            <person name="Cottet A."/>
            <person name="Casacuberta E."/>
            <person name="Monfort A."/>
            <person name="Argiriou A."/>
            <person name="Flores M."/>
            <person name="Liguori R."/>
            <person name="Vitale D."/>
            <person name="Mannhaupt G."/>
            <person name="Haase D."/>
            <person name="Schoof H."/>
            <person name="Rudd S."/>
            <person name="Zaccaria P."/>
            <person name="Mewes H.-W."/>
            <person name="Mayer K.F.X."/>
            <person name="Kaul S."/>
            <person name="Town C.D."/>
            <person name="Koo H.L."/>
            <person name="Tallon L.J."/>
            <person name="Jenkins J."/>
            <person name="Rooney T."/>
            <person name="Rizzo M."/>
            <person name="Walts A."/>
            <person name="Utterback T."/>
            <person name="Fujii C.Y."/>
            <person name="Shea T.P."/>
            <person name="Creasy T.H."/>
            <person name="Haas B."/>
            <person name="Maiti R."/>
            <person name="Wu D."/>
            <person name="Peterson J."/>
            <person name="Van Aken S."/>
            <person name="Pai G."/>
            <person name="Militscher J."/>
            <person name="Sellers P."/>
            <person name="Gill J.E."/>
            <person name="Feldblyum T.V."/>
            <person name="Preuss D."/>
            <person name="Lin X."/>
            <person name="Nierman W.C."/>
            <person name="Salzberg S.L."/>
            <person name="White O."/>
            <person name="Venter J.C."/>
            <person name="Fraser C.M."/>
            <person name="Kaneko T."/>
            <person name="Nakamura Y."/>
            <person name="Sato S."/>
            <person name="Kato T."/>
            <person name="Asamizu E."/>
            <person name="Sasamoto S."/>
            <person name="Kimura T."/>
            <person name="Idesawa K."/>
            <person name="Kawashima K."/>
            <person name="Kishida Y."/>
            <person name="Kiyokawa C."/>
            <person name="Kohara M."/>
            <person name="Matsumoto M."/>
            <person name="Matsuno A."/>
            <person name="Muraki A."/>
            <person name="Nakayama S."/>
            <person name="Nakazaki N."/>
            <person name="Shinpo S."/>
            <person name="Takeuchi C."/>
            <person name="Wada T."/>
            <person name="Watanabe A."/>
            <person name="Yamada M."/>
            <person name="Yasuda M."/>
            <person name="Tabata S."/>
        </authorList>
    </citation>
    <scope>NUCLEOTIDE SEQUENCE [LARGE SCALE GENOMIC DNA]</scope>
    <source>
        <strain>cv. Columbia</strain>
    </source>
</reference>
<reference key="3">
    <citation type="journal article" date="2017" name="Plant J.">
        <title>Araport11: a complete reannotation of the Arabidopsis thaliana reference genome.</title>
        <authorList>
            <person name="Cheng C.Y."/>
            <person name="Krishnakumar V."/>
            <person name="Chan A.P."/>
            <person name="Thibaud-Nissen F."/>
            <person name="Schobel S."/>
            <person name="Town C.D."/>
        </authorList>
    </citation>
    <scope>GENOME REANNOTATION</scope>
    <source>
        <strain>cv. Columbia</strain>
    </source>
</reference>
<reference key="4">
    <citation type="journal article" date="2003" name="Science">
        <title>Empirical analysis of transcriptional activity in the Arabidopsis genome.</title>
        <authorList>
            <person name="Yamada K."/>
            <person name="Lim J."/>
            <person name="Dale J.M."/>
            <person name="Chen H."/>
            <person name="Shinn P."/>
            <person name="Palm C.J."/>
            <person name="Southwick A.M."/>
            <person name="Wu H.C."/>
            <person name="Kim C.J."/>
            <person name="Nguyen M."/>
            <person name="Pham P.K."/>
            <person name="Cheuk R.F."/>
            <person name="Karlin-Newmann G."/>
            <person name="Liu S.X."/>
            <person name="Lam B."/>
            <person name="Sakano H."/>
            <person name="Wu T."/>
            <person name="Yu G."/>
            <person name="Miranda M."/>
            <person name="Quach H.L."/>
            <person name="Tripp M."/>
            <person name="Chang C.H."/>
            <person name="Lee J.M."/>
            <person name="Toriumi M.J."/>
            <person name="Chan M.M."/>
            <person name="Tang C.C."/>
            <person name="Onodera C.S."/>
            <person name="Deng J.M."/>
            <person name="Akiyama K."/>
            <person name="Ansari Y."/>
            <person name="Arakawa T."/>
            <person name="Banh J."/>
            <person name="Banno F."/>
            <person name="Bowser L."/>
            <person name="Brooks S.Y."/>
            <person name="Carninci P."/>
            <person name="Chao Q."/>
            <person name="Choy N."/>
            <person name="Enju A."/>
            <person name="Goldsmith A.D."/>
            <person name="Gurjal M."/>
            <person name="Hansen N.F."/>
            <person name="Hayashizaki Y."/>
            <person name="Johnson-Hopson C."/>
            <person name="Hsuan V.W."/>
            <person name="Iida K."/>
            <person name="Karnes M."/>
            <person name="Khan S."/>
            <person name="Koesema E."/>
            <person name="Ishida J."/>
            <person name="Jiang P.X."/>
            <person name="Jones T."/>
            <person name="Kawai J."/>
            <person name="Kamiya A."/>
            <person name="Meyers C."/>
            <person name="Nakajima M."/>
            <person name="Narusaka M."/>
            <person name="Seki M."/>
            <person name="Sakurai T."/>
            <person name="Satou M."/>
            <person name="Tamse R."/>
            <person name="Vaysberg M."/>
            <person name="Wallender E.K."/>
            <person name="Wong C."/>
            <person name="Yamamura Y."/>
            <person name="Yuan S."/>
            <person name="Shinozaki K."/>
            <person name="Davis R.W."/>
            <person name="Theologis A."/>
            <person name="Ecker J.R."/>
        </authorList>
    </citation>
    <scope>NUCLEOTIDE SEQUENCE [LARGE SCALE MRNA]</scope>
    <source>
        <strain>cv. Columbia</strain>
    </source>
</reference>
<reference key="5">
    <citation type="journal article" date="1996" name="Plant Physiol.">
        <title>A metal-accumulator mutant of Arabidopsis thaliana.</title>
        <authorList>
            <person name="Delhaize E."/>
        </authorList>
    </citation>
    <scope>MUTANT MAN1</scope>
    <scope>DISRUPTION PHENOTYPE</scope>
</reference>
<reference key="6">
    <citation type="journal article" date="2002" name="J. Biol. Chem.">
        <title>Functional cloning and characterization of a plant efflux carrier for multidrug and heavy metal detoxification.</title>
        <authorList>
            <person name="Li L."/>
            <person name="He Z."/>
            <person name="Pandey G.K."/>
            <person name="Tsuchiya T."/>
            <person name="Luan S."/>
        </authorList>
    </citation>
    <scope>GENE FAMILY</scope>
    <scope>NOMENCLATURE</scope>
</reference>
<reference key="7">
    <citation type="journal article" date="2003" name="Eur. J. Biochem.">
        <title>The multidrug/oligosaccharidyl-lipid/polysaccharide (MOP) exporter superfamily.</title>
        <authorList>
            <person name="Hvorup R.N."/>
            <person name="Winnen B."/>
            <person name="Chang A.B."/>
            <person name="Jiang Y."/>
            <person name="Zhou X.F."/>
            <person name="Saier M.H. Jr."/>
        </authorList>
    </citation>
    <scope>GENE FAMILY</scope>
</reference>
<reference key="8">
    <citation type="journal article" date="2004" name="Plant Physiol.">
        <title>FRD3 controls iron localization in Arabidopsis.</title>
        <authorList>
            <person name="Green L.S."/>
            <person name="Rogers E.E."/>
        </authorList>
    </citation>
    <scope>FUNCTION</scope>
    <scope>TISSUE SPECIFICITY</scope>
    <scope>SUBCELLULAR LOCATION</scope>
</reference>
<reference key="9">
    <citation type="journal article" date="2007" name="Plant Physiol.">
        <title>The FRD3-mediated efflux of citrate into the root vasculature is necessary for efficient iron translocation.</title>
        <authorList>
            <person name="Durrett T.P."/>
            <person name="Gassmann W."/>
            <person name="Rogers E.E."/>
        </authorList>
    </citation>
    <scope>FUNCTION</scope>
</reference>
<reference key="10">
    <citation type="journal article" date="2009" name="Plant J.">
        <title>Aluminum-activated citrate and malate transporters from the MATE and ALMT families function independently to confer Arabidopsis aluminum tolerance.</title>
        <authorList>
            <person name="Liu J."/>
            <person name="Magalhaes J.V."/>
            <person name="Shaff J."/>
            <person name="Kochian L.V."/>
        </authorList>
    </citation>
    <scope>FUNCTION</scope>
    <scope>INDUCTION BY ALUMINUM</scope>
    <scope>DISRUPTION PHENOTYPE</scope>
</reference>
<reference key="11">
    <citation type="journal article" date="2011" name="Plant Cell">
        <title>The FRD3 citrate effluxer promotes iron nutrition between symplastically disconnected tissues throughout Arabidopsis development.</title>
        <authorList>
            <person name="Roschzttardtz H."/>
            <person name="Seguela-Arnaud M."/>
            <person name="Briat J.F."/>
            <person name="Vert G."/>
            <person name="Curie C."/>
        </authorList>
    </citation>
    <scope>DEVELOPMENTAL STAGE</scope>
    <scope>DISRUPTION PHENOTYPE</scope>
    <scope>TISSUE SPECIFICITY</scope>
    <scope>FUNCTION</scope>
</reference>
<reference key="12">
    <citation type="journal article" date="2014" name="Plant Cell Environ.">
        <title>Abscisic acid alleviates iron deficiency by promoting root iron reutilization and transport from root to shoot in Arabidopsis.</title>
        <authorList>
            <person name="Lei G.J."/>
            <person name="Zhu X.F."/>
            <person name="Wang Z.W."/>
            <person name="Dong F."/>
            <person name="Dong N.Y."/>
            <person name="Zheng S.J."/>
        </authorList>
    </citation>
    <scope>INDUCTION BY ABA</scope>
</reference>
<protein>
    <recommendedName>
        <fullName evidence="10">Protein DETOXIFICATION 43</fullName>
        <shortName evidence="10">AtDTX43</shortName>
    </recommendedName>
    <alternativeName>
        <fullName evidence="13">Multidrug and toxic compound extrusion protein 43</fullName>
        <shortName evidence="13">MATE protein 43</shortName>
    </alternativeName>
    <alternativeName>
        <fullName evidence="11">Protein FERRIC REDUCTASE DEFECTIVE 3</fullName>
        <shortName evidence="11">AtFRD3</shortName>
    </alternativeName>
    <alternativeName>
        <fullName evidence="12">Protein MANGANESE ACCUMULATOR 1</fullName>
    </alternativeName>
</protein>
<evidence type="ECO:0000255" key="1"/>
<evidence type="ECO:0000256" key="2">
    <source>
        <dbReference type="SAM" id="MobiDB-lite"/>
    </source>
</evidence>
<evidence type="ECO:0000269" key="3">
    <source>
    </source>
</evidence>
<evidence type="ECO:0000269" key="4">
    <source>
    </source>
</evidence>
<evidence type="ECO:0000269" key="5">
    <source>
    </source>
</evidence>
<evidence type="ECO:0000269" key="6">
    <source>
    </source>
</evidence>
<evidence type="ECO:0000269" key="7">
    <source>
    </source>
</evidence>
<evidence type="ECO:0000269" key="8">
    <source>
    </source>
</evidence>
<evidence type="ECO:0000269" key="9">
    <source>
    </source>
</evidence>
<evidence type="ECO:0000303" key="10">
    <source>
    </source>
</evidence>
<evidence type="ECO:0000303" key="11">
    <source>
    </source>
</evidence>
<evidence type="ECO:0000303" key="12">
    <source>
    </source>
</evidence>
<evidence type="ECO:0000305" key="13"/>
<evidence type="ECO:0000312" key="14">
    <source>
        <dbReference type="Araport" id="AT3G08040"/>
    </source>
</evidence>
<evidence type="ECO:0000312" key="15">
    <source>
        <dbReference type="EMBL" id="AAF21214.1"/>
    </source>
</evidence>
<evidence type="ECO:0000312" key="16">
    <source>
        <dbReference type="EMBL" id="AAG50830.1"/>
    </source>
</evidence>
<gene>
    <name evidence="10" type="primary">DTX43</name>
    <name evidence="11" type="synonym">FRD3</name>
    <name evidence="12" type="synonym">MAN1</name>
    <name evidence="14" type="ordered locus">At3g08040</name>
    <name evidence="15" type="ORF">F17A17.38</name>
    <name evidence="16" type="ORF">T8G24.8</name>
</gene>
<proteinExistence type="evidence at protein level"/>
<accession>Q9SFB0</accession>
<comment type="function">
    <text evidence="3 4 5 6 7">Citrate transporter responsible for loading citrate into xylem tissues, which helps facilitate iron transport to shoots (PubMed:12172022, PubMed:15310833, PubMed:17351051, PubMed:18826429). Mediates the citrate release in the apoplastic spaces during plant development allowing iron nutrition between symplastically disconnected tissues (PubMed:21742986).</text>
</comment>
<comment type="subcellular location">
    <subcellularLocation>
        <location evidence="4">Cell membrane</location>
        <topology evidence="4">Multi-pass membrane protein</topology>
    </subcellularLocation>
</comment>
<comment type="tissue specificity">
    <text evidence="3 4 7">Expressed in roots in the pericycle and cells internal to the pericycle and surrounding the vascular tissue (PubMed:12172022, PubMed:15310833). Also expressed in seed and flower (PubMed:21742986).</text>
</comment>
<comment type="developmental stage">
    <text evidence="7">Expressed during embryogenesis and during the early stages of germination.</text>
</comment>
<comment type="induction">
    <text evidence="3 6 8">Two-fold induction by iron deficiency. Not induced by aluminum (PubMed:12172022, PubMed:18826429). Induced by abscisic acid (ABA) (PubMed:24111973).</text>
</comment>
<comment type="disruption phenotype">
    <text evidence="3 6 7 9">Chlorotic (PubMed:12172022, PubMed:18826429, PubMed:21742986, PubMed:8754685). Constitutive expression of strategy I iron deficiency response and accumulation of iron, manganese and zinc in shoots. No reduction in aluminum tolerance (PubMed:12172022, PubMed:18826429). Accumulation of Mn, Cu, Zn and Mg in leaves and accumulation of Fe in roots (PubMed:8754685). Altered pollen development (PubMed:21742986).</text>
</comment>
<comment type="similarity">
    <text evidence="13">Belongs to the multi antimicrobial extrusion (MATE) (TC 2.A.66.1) family.</text>
</comment>
<dbReference type="EMBL" id="AF448231">
    <property type="protein sequence ID" value="AAL86700.1"/>
    <property type="molecule type" value="mRNA"/>
</dbReference>
<dbReference type="EMBL" id="AC013483">
    <property type="protein sequence ID" value="AAF21214.1"/>
    <property type="molecule type" value="Genomic_DNA"/>
</dbReference>
<dbReference type="EMBL" id="AC074395">
    <property type="protein sequence ID" value="AAG50830.1"/>
    <property type="molecule type" value="Genomic_DNA"/>
</dbReference>
<dbReference type="EMBL" id="CP002686">
    <property type="protein sequence ID" value="AEE74634.1"/>
    <property type="molecule type" value="Genomic_DNA"/>
</dbReference>
<dbReference type="EMBL" id="AY056439">
    <property type="protein sequence ID" value="AAL08295.1"/>
    <property type="molecule type" value="mRNA"/>
</dbReference>
<dbReference type="EMBL" id="AY057517">
    <property type="protein sequence ID" value="AAL09757.1"/>
    <property type="molecule type" value="mRNA"/>
</dbReference>
<dbReference type="EMBL" id="AY133652">
    <property type="protein sequence ID" value="AAM91482.1"/>
    <property type="molecule type" value="mRNA"/>
</dbReference>
<dbReference type="EMBL" id="BT006370">
    <property type="protein sequence ID" value="AAP21178.1"/>
    <property type="molecule type" value="mRNA"/>
</dbReference>
<dbReference type="RefSeq" id="NP_187461.1">
    <property type="nucleotide sequence ID" value="NM_111683.2"/>
</dbReference>
<dbReference type="SMR" id="Q9SFB0"/>
<dbReference type="BioGRID" id="5330">
    <property type="interactions" value="1"/>
</dbReference>
<dbReference type="IntAct" id="Q9SFB0">
    <property type="interactions" value="1"/>
</dbReference>
<dbReference type="STRING" id="3702.Q9SFB0"/>
<dbReference type="TCDB" id="2.A.66.1.24">
    <property type="family name" value="the multidrug/oligosaccharidyl-lipid/polysaccharide (mop) flippase superfamily"/>
</dbReference>
<dbReference type="iPTMnet" id="Q9SFB0"/>
<dbReference type="PaxDb" id="3702-AT3G08040.1"/>
<dbReference type="ProteomicsDB" id="222227"/>
<dbReference type="EnsemblPlants" id="AT3G08040.1">
    <property type="protein sequence ID" value="AT3G08040.1"/>
    <property type="gene ID" value="AT3G08040"/>
</dbReference>
<dbReference type="GeneID" id="819995"/>
<dbReference type="Gramene" id="AT3G08040.1">
    <property type="protein sequence ID" value="AT3G08040.1"/>
    <property type="gene ID" value="AT3G08040"/>
</dbReference>
<dbReference type="KEGG" id="ath:AT3G08040"/>
<dbReference type="Araport" id="AT3G08040"/>
<dbReference type="TAIR" id="AT3G08040">
    <property type="gene designation" value="FRD3"/>
</dbReference>
<dbReference type="eggNOG" id="KOG1347">
    <property type="taxonomic scope" value="Eukaryota"/>
</dbReference>
<dbReference type="HOGENOM" id="CLU_012893_16_2_1"/>
<dbReference type="InParanoid" id="Q9SFB0"/>
<dbReference type="PhylomeDB" id="Q9SFB0"/>
<dbReference type="PRO" id="PR:Q9SFB0"/>
<dbReference type="Proteomes" id="UP000006548">
    <property type="component" value="Chromosome 3"/>
</dbReference>
<dbReference type="ExpressionAtlas" id="Q9SFB0">
    <property type="expression patterns" value="baseline and differential"/>
</dbReference>
<dbReference type="GO" id="GO:0005886">
    <property type="term" value="C:plasma membrane"/>
    <property type="evidence" value="ECO:0007669"/>
    <property type="project" value="UniProtKB-SubCell"/>
</dbReference>
<dbReference type="GO" id="GO:0015297">
    <property type="term" value="F:antiporter activity"/>
    <property type="evidence" value="ECO:0007669"/>
    <property type="project" value="InterPro"/>
</dbReference>
<dbReference type="GO" id="GO:0015137">
    <property type="term" value="F:citrate transmembrane transporter activity"/>
    <property type="evidence" value="ECO:0000314"/>
    <property type="project" value="UniProtKB"/>
</dbReference>
<dbReference type="GO" id="GO:0005381">
    <property type="term" value="F:iron ion transmembrane transporter activity"/>
    <property type="evidence" value="ECO:0000315"/>
    <property type="project" value="TAIR"/>
</dbReference>
<dbReference type="GO" id="GO:0046873">
    <property type="term" value="F:metal ion transmembrane transporter activity"/>
    <property type="evidence" value="ECO:0000315"/>
    <property type="project" value="UniProtKB"/>
</dbReference>
<dbReference type="GO" id="GO:0042910">
    <property type="term" value="F:xenobiotic transmembrane transporter activity"/>
    <property type="evidence" value="ECO:0007669"/>
    <property type="project" value="InterPro"/>
</dbReference>
<dbReference type="GO" id="GO:0016036">
    <property type="term" value="P:cellular response to phosphate starvation"/>
    <property type="evidence" value="ECO:0000315"/>
    <property type="project" value="TAIR"/>
</dbReference>
<dbReference type="GO" id="GO:0006879">
    <property type="term" value="P:intracellular iron ion homeostasis"/>
    <property type="evidence" value="ECO:0000315"/>
    <property type="project" value="UniProtKB"/>
</dbReference>
<dbReference type="GO" id="GO:0030001">
    <property type="term" value="P:metal ion transport"/>
    <property type="evidence" value="ECO:0000315"/>
    <property type="project" value="UniProtKB"/>
</dbReference>
<dbReference type="GO" id="GO:0009737">
    <property type="term" value="P:response to abscisic acid"/>
    <property type="evidence" value="ECO:0000270"/>
    <property type="project" value="UniProtKB"/>
</dbReference>
<dbReference type="CDD" id="cd13136">
    <property type="entry name" value="MATE_DinF_like"/>
    <property type="match status" value="1"/>
</dbReference>
<dbReference type="InterPro" id="IPR044644">
    <property type="entry name" value="DinF-like"/>
</dbReference>
<dbReference type="InterPro" id="IPR002528">
    <property type="entry name" value="MATE_fam"/>
</dbReference>
<dbReference type="NCBIfam" id="TIGR00797">
    <property type="entry name" value="matE"/>
    <property type="match status" value="1"/>
</dbReference>
<dbReference type="PANTHER" id="PTHR42893:SF11">
    <property type="entry name" value="PROTEIN DETOXIFICATION 43"/>
    <property type="match status" value="1"/>
</dbReference>
<dbReference type="PANTHER" id="PTHR42893">
    <property type="entry name" value="PROTEIN DETOXIFICATION 44, CHLOROPLASTIC-RELATED"/>
    <property type="match status" value="1"/>
</dbReference>
<dbReference type="Pfam" id="PF01554">
    <property type="entry name" value="MatE"/>
    <property type="match status" value="2"/>
</dbReference>
<keyword id="KW-1003">Cell membrane</keyword>
<keyword id="KW-0407">Ion channel</keyword>
<keyword id="KW-0406">Ion transport</keyword>
<keyword id="KW-0472">Membrane</keyword>
<keyword id="KW-1185">Reference proteome</keyword>
<keyword id="KW-0812">Transmembrane</keyword>
<keyword id="KW-1133">Transmembrane helix</keyword>
<keyword id="KW-0813">Transport</keyword>
<name>DTX43_ARATH</name>
<sequence>MTETGDDLATVKKPIPFLVIFKDLRHVFSRDTTGREILGIAFPAALALAADPIASLIDTAFVGRLGAVQLAAVGVSIAIFNQASRITIFPLVSLTTSFVAEEDTMEKMKEEANKANLVHAETILVQDSLEKGISSPTSNDTNQPQQPPAPDTKSNSGNKSNKKEKRTIRTASTAMILGLILGLVQAIFLIFSSKLLLGVMGVKPNSPMLSPAHKYLSIRALGAPALLLSLAMQGIFRGFKDTKTPLFATVVADVINIVLDPIFIFVLRLGIIGAAIAHVISQYFMTLILFVFLAKKVNLIPPNFGDLQFGRFLKNGLLLLARTIAVTFCQTLAAAMAARLGTTPMAAFQICLQVWLTSSLLNDGLAVAGQAILACSFAEKDYNKVTAVASRVLQMGFVLGLGLSVFVGLGLYFGAGVFSKDPAVIHLMAIGIPFIAATQPINSLAFVLDGVNFGASDFAYTAYSMVGVAAISIAAVIYMAKTNGFIGIWIALTIYMALRAITGIARMATGTGPWRFLRGRSSSSSS</sequence>
<feature type="chain" id="PRO_0000405272" description="Protein DETOXIFICATION 43">
    <location>
        <begin position="1"/>
        <end position="526"/>
    </location>
</feature>
<feature type="topological domain" description="Cytoplasmic" evidence="1">
    <location>
        <begin position="1"/>
        <end position="36"/>
    </location>
</feature>
<feature type="transmembrane region" description="Helical" evidence="1">
    <location>
        <begin position="37"/>
        <end position="57"/>
    </location>
</feature>
<feature type="topological domain" description="Extracellular" evidence="1">
    <location>
        <begin position="58"/>
        <end position="59"/>
    </location>
</feature>
<feature type="transmembrane region" description="Helical" evidence="1">
    <location>
        <begin position="60"/>
        <end position="80"/>
    </location>
</feature>
<feature type="topological domain" description="Cytoplasmic" evidence="1">
    <location>
        <begin position="81"/>
        <end position="170"/>
    </location>
</feature>
<feature type="transmembrane region" description="Helical" evidence="1">
    <location>
        <begin position="171"/>
        <end position="191"/>
    </location>
</feature>
<feature type="topological domain" description="Extracellular" evidence="1">
    <location>
        <begin position="192"/>
        <end position="215"/>
    </location>
</feature>
<feature type="transmembrane region" description="Helical" evidence="1">
    <location>
        <begin position="216"/>
        <end position="236"/>
    </location>
</feature>
<feature type="topological domain" description="Cytoplasmic" evidence="1">
    <location>
        <begin position="237"/>
        <end position="244"/>
    </location>
</feature>
<feature type="transmembrane region" description="Helical" evidence="1">
    <location>
        <begin position="245"/>
        <end position="267"/>
    </location>
</feature>
<feature type="topological domain" description="Extracellular" evidence="1">
    <location>
        <begin position="268"/>
        <end position="270"/>
    </location>
</feature>
<feature type="transmembrane region" description="Helical" evidence="1">
    <location>
        <begin position="271"/>
        <end position="293"/>
    </location>
</feature>
<feature type="topological domain" description="Cytoplasmic" evidence="1">
    <location>
        <begin position="294"/>
        <end position="316"/>
    </location>
</feature>
<feature type="transmembrane region" description="Helical" evidence="1">
    <location>
        <begin position="317"/>
        <end position="337"/>
    </location>
</feature>
<feature type="topological domain" description="Extracellular" evidence="1">
    <location>
        <begin position="338"/>
        <end position="353"/>
    </location>
</feature>
<feature type="transmembrane region" description="Helical" evidence="1">
    <location>
        <begin position="354"/>
        <end position="374"/>
    </location>
</feature>
<feature type="topological domain" description="Cytoplasmic" evidence="1">
    <location>
        <begin position="375"/>
        <end position="396"/>
    </location>
</feature>
<feature type="transmembrane region" description="Helical" evidence="1">
    <location>
        <begin position="397"/>
        <end position="417"/>
    </location>
</feature>
<feature type="topological domain" description="Extracellular" evidence="1">
    <location>
        <begin position="418"/>
        <end position="426"/>
    </location>
</feature>
<feature type="transmembrane region" description="Helical" evidence="1">
    <location>
        <begin position="427"/>
        <end position="447"/>
    </location>
</feature>
<feature type="topological domain" description="Cytoplasmic" evidence="1">
    <location>
        <begin position="448"/>
        <end position="457"/>
    </location>
</feature>
<feature type="transmembrane region" description="Helical" evidence="1">
    <location>
        <begin position="458"/>
        <end position="478"/>
    </location>
</feature>
<feature type="topological domain" description="Extracellular" evidence="1">
    <location>
        <begin position="479"/>
        <end position="484"/>
    </location>
</feature>
<feature type="transmembrane region" description="Helical" evidence="1">
    <location>
        <begin position="485"/>
        <end position="505"/>
    </location>
</feature>
<feature type="topological domain" description="Cytoplasmic" evidence="1">
    <location>
        <begin position="506"/>
        <end position="526"/>
    </location>
</feature>
<feature type="region of interest" description="Disordered" evidence="2">
    <location>
        <begin position="133"/>
        <end position="166"/>
    </location>
</feature>
<feature type="compositionally biased region" description="Polar residues" evidence="2">
    <location>
        <begin position="134"/>
        <end position="144"/>
    </location>
</feature>
<feature type="mutagenesis site" description="In fdr3-1; loss of function." evidence="3">
    <original>A</original>
    <variation>D</variation>
    <location>
        <position position="54"/>
    </location>
</feature>
<organism>
    <name type="scientific">Arabidopsis thaliana</name>
    <name type="common">Mouse-ear cress</name>
    <dbReference type="NCBI Taxonomy" id="3702"/>
    <lineage>
        <taxon>Eukaryota</taxon>
        <taxon>Viridiplantae</taxon>
        <taxon>Streptophyta</taxon>
        <taxon>Embryophyta</taxon>
        <taxon>Tracheophyta</taxon>
        <taxon>Spermatophyta</taxon>
        <taxon>Magnoliopsida</taxon>
        <taxon>eudicotyledons</taxon>
        <taxon>Gunneridae</taxon>
        <taxon>Pentapetalae</taxon>
        <taxon>rosids</taxon>
        <taxon>malvids</taxon>
        <taxon>Brassicales</taxon>
        <taxon>Brassicaceae</taxon>
        <taxon>Camelineae</taxon>
        <taxon>Arabidopsis</taxon>
    </lineage>
</organism>